<keyword id="KW-0042">Antenna complex</keyword>
<keyword id="KW-0076">Bacteriochlorophyll</keyword>
<keyword id="KW-0997">Cell inner membrane</keyword>
<keyword id="KW-1003">Cell membrane</keyword>
<keyword id="KW-0148">Chlorophyll</keyword>
<keyword id="KW-0157">Chromophore</keyword>
<keyword id="KW-0903">Direct protein sequencing</keyword>
<keyword id="KW-0437">Light-harvesting polypeptide</keyword>
<keyword id="KW-0460">Magnesium</keyword>
<keyword id="KW-0472">Membrane</keyword>
<keyword id="KW-0479">Metal-binding</keyword>
<keyword id="KW-0812">Transmembrane</keyword>
<keyword id="KW-1133">Transmembrane helix</keyword>
<accession>P35098</accession>
<sequence length="54" mass="5917">AEDRSSLSGVSDAEAKEFHALFVSSFMGFMVVAVLAHVLAWAWRPWIPGPKGWA</sequence>
<dbReference type="SMR" id="P35098"/>
<dbReference type="GO" id="GO:0005886">
    <property type="term" value="C:plasma membrane"/>
    <property type="evidence" value="ECO:0007669"/>
    <property type="project" value="UniProtKB-SubCell"/>
</dbReference>
<dbReference type="GO" id="GO:0030077">
    <property type="term" value="C:plasma membrane light-harvesting complex"/>
    <property type="evidence" value="ECO:0007669"/>
    <property type="project" value="InterPro"/>
</dbReference>
<dbReference type="GO" id="GO:0042314">
    <property type="term" value="F:bacteriochlorophyll binding"/>
    <property type="evidence" value="ECO:0007669"/>
    <property type="project" value="UniProtKB-KW"/>
</dbReference>
<dbReference type="GO" id="GO:0045156">
    <property type="term" value="F:electron transporter, transferring electrons within the cyclic electron transport pathway of photosynthesis activity"/>
    <property type="evidence" value="ECO:0007669"/>
    <property type="project" value="InterPro"/>
</dbReference>
<dbReference type="GO" id="GO:0046872">
    <property type="term" value="F:metal ion binding"/>
    <property type="evidence" value="ECO:0007669"/>
    <property type="project" value="UniProtKB-KW"/>
</dbReference>
<dbReference type="GO" id="GO:0019684">
    <property type="term" value="P:photosynthesis, light reaction"/>
    <property type="evidence" value="ECO:0007669"/>
    <property type="project" value="InterPro"/>
</dbReference>
<dbReference type="Gene3D" id="1.20.5.250">
    <property type="match status" value="1"/>
</dbReference>
<dbReference type="InterPro" id="IPR000066">
    <property type="entry name" value="Antenna_a/b"/>
</dbReference>
<dbReference type="InterPro" id="IPR023623">
    <property type="entry name" value="Antenna_beta_CS"/>
</dbReference>
<dbReference type="InterPro" id="IPR023624">
    <property type="entry name" value="Antenna_beta_dom_sf"/>
</dbReference>
<dbReference type="InterPro" id="IPR002362">
    <property type="entry name" value="LHB-1/5"/>
</dbReference>
<dbReference type="InterPro" id="IPR035889">
    <property type="entry name" value="Light-harvesting_complex"/>
</dbReference>
<dbReference type="NCBIfam" id="NF040862">
    <property type="entry name" value="pufB_517_ASD"/>
    <property type="match status" value="1"/>
</dbReference>
<dbReference type="Pfam" id="PF00556">
    <property type="entry name" value="LHC"/>
    <property type="match status" value="1"/>
</dbReference>
<dbReference type="PIRSF" id="PIRSF002900">
    <property type="entry name" value="Antenna_beta"/>
    <property type="match status" value="1"/>
</dbReference>
<dbReference type="PRINTS" id="PR00674">
    <property type="entry name" value="LIGHTHARVSTB"/>
</dbReference>
<dbReference type="SUPFAM" id="SSF56918">
    <property type="entry name" value="Light-harvesting complex subunits"/>
    <property type="match status" value="1"/>
</dbReference>
<dbReference type="PROSITE" id="PS00969">
    <property type="entry name" value="ANTENNA_COMP_BETA"/>
    <property type="match status" value="1"/>
</dbReference>
<name>LHB6_RHOAC</name>
<proteinExistence type="evidence at protein level"/>
<feature type="chain" id="PRO_0000099820" description="Light-harvesting protein B-880 beta chain">
    <location>
        <begin position="1"/>
        <end position="54"/>
    </location>
</feature>
<feature type="topological domain" description="Cytoplasmic" evidence="1">
    <location>
        <begin position="1"/>
        <end position="20"/>
    </location>
</feature>
<feature type="transmembrane region" description="Helical" evidence="1">
    <location>
        <begin position="21"/>
        <end position="43"/>
    </location>
</feature>
<feature type="topological domain" description="Periplasmic" evidence="1">
    <location>
        <begin position="44"/>
        <end position="54"/>
    </location>
</feature>
<feature type="binding site" description="axial binding residue" evidence="1">
    <location>
        <position position="19"/>
    </location>
    <ligand>
        <name>a bacteriochlorophyll</name>
        <dbReference type="ChEBI" id="CHEBI:38201"/>
    </ligand>
    <ligandPart>
        <name>Mg</name>
        <dbReference type="ChEBI" id="CHEBI:25107"/>
    </ligandPart>
</feature>
<feature type="binding site" description="axial binding residue" evidence="1">
    <location>
        <position position="37"/>
    </location>
    <ligand>
        <name>a bacteriochlorophyll</name>
        <dbReference type="ChEBI" id="CHEBI:38201"/>
    </ligand>
    <ligandPart>
        <name>Mg</name>
        <dbReference type="ChEBI" id="CHEBI:25107"/>
    </ligandPart>
</feature>
<evidence type="ECO:0000255" key="1"/>
<evidence type="ECO:0000305" key="2"/>
<comment type="function">
    <text>Antenna complexes are light-harvesting systems, which transfer the excitation energy to the reaction centers.</text>
</comment>
<comment type="subunit">
    <text>The core complex is formed by different alpha and beta chains, binding bacteriochlorophyll molecules, and arranged most probably in tetrameric structures disposed around the reaction center. The non-pigmented gamma chains may constitute additional components.</text>
</comment>
<comment type="subcellular location">
    <subcellularLocation>
        <location>Cell inner membrane</location>
        <topology>Single-pass type II membrane protein</topology>
    </subcellularLocation>
</comment>
<comment type="similarity">
    <text evidence="2">Belongs to the antenna complex beta subunit family.</text>
</comment>
<reference key="1">
    <citation type="journal article" date="1992" name="Eur. J. Biochem.">
        <title>The primary structure of the antenna polypeptides of Ectothiorhodospira halochloris and Ectothiorhodospira halophila. Four core-type antenna polypeptides in E. halochloris and E. halophila.</title>
        <authorList>
            <person name="Wagner-Huber R."/>
            <person name="Brunisholz R.A."/>
            <person name="Bissig I."/>
            <person name="Frank G."/>
            <person name="Suter F."/>
            <person name="Zuber H."/>
        </authorList>
    </citation>
    <scope>PROTEIN SEQUENCE</scope>
    <source>
        <strain>ATCC 25092 / 7050 / DSM 137 / LMG 4304 / NCIB 11761</strain>
    </source>
</reference>
<organism>
    <name type="scientific">Rhodoblastus acidophilus</name>
    <name type="common">Rhodopseudomonas acidophila</name>
    <dbReference type="NCBI Taxonomy" id="1074"/>
    <lineage>
        <taxon>Bacteria</taxon>
        <taxon>Pseudomonadati</taxon>
        <taxon>Pseudomonadota</taxon>
        <taxon>Alphaproteobacteria</taxon>
        <taxon>Hyphomicrobiales</taxon>
        <taxon>Rhodoblastaceae</taxon>
        <taxon>Rhodoblastus</taxon>
    </lineage>
</organism>
<protein>
    <recommendedName>
        <fullName>Light-harvesting protein B-880 beta chain</fullName>
    </recommendedName>
    <alternativeName>
        <fullName>Antenna pigment protein beta chain</fullName>
    </alternativeName>
</protein>